<sequence>MQNQVIQLGNIEIGNNKPFVLFGGMNVLESRDMAMQVCEKYVEVTQKLGVPYIFKASFDKANRSSIHSYRGPGMEEGLKIFQELKETFGVKVITDVHEIYQCRPVAEVVDIIQLPAFLARQTDLVEAMARTGAVINVKKPQFLSPGQIGNIVEKIAECGNNKVILCDRGTNFGYDNLVVDMLGFNIMKKVSQGCPVIFDVTHSLQCRDPFGAASGGRRDQVTELARSGMAIGLAGLFLESHPNPNQAKCDGPSALPLSKLEPFVAQMKAIDDLVKSFEEIDTSN</sequence>
<evidence type="ECO:0000255" key="1">
    <source>
        <dbReference type="HAMAP-Rule" id="MF_00056"/>
    </source>
</evidence>
<gene>
    <name evidence="1" type="primary">kdsA</name>
    <name type="ordered locus">HSM_1421</name>
</gene>
<protein>
    <recommendedName>
        <fullName evidence="1">2-dehydro-3-deoxyphosphooctonate aldolase</fullName>
        <ecNumber evidence="1">2.5.1.55</ecNumber>
    </recommendedName>
    <alternativeName>
        <fullName evidence="1">3-deoxy-D-manno-octulosonic acid 8-phosphate synthase</fullName>
    </alternativeName>
    <alternativeName>
        <fullName evidence="1">KDO-8-phosphate synthase</fullName>
        <shortName evidence="1">KDO 8-P synthase</shortName>
        <shortName evidence="1">KDOPS</shortName>
    </alternativeName>
    <alternativeName>
        <fullName evidence="1">Phospho-2-dehydro-3-deoxyoctonate aldolase</fullName>
    </alternativeName>
</protein>
<feature type="chain" id="PRO_1000091818" description="2-dehydro-3-deoxyphosphooctonate aldolase">
    <location>
        <begin position="1"/>
        <end position="284"/>
    </location>
</feature>
<proteinExistence type="inferred from homology"/>
<organism>
    <name type="scientific">Histophilus somni (strain 2336)</name>
    <name type="common">Haemophilus somnus</name>
    <dbReference type="NCBI Taxonomy" id="228400"/>
    <lineage>
        <taxon>Bacteria</taxon>
        <taxon>Pseudomonadati</taxon>
        <taxon>Pseudomonadota</taxon>
        <taxon>Gammaproteobacteria</taxon>
        <taxon>Pasteurellales</taxon>
        <taxon>Pasteurellaceae</taxon>
        <taxon>Histophilus</taxon>
    </lineage>
</organism>
<accession>B0UUE2</accession>
<dbReference type="EC" id="2.5.1.55" evidence="1"/>
<dbReference type="EMBL" id="CP000947">
    <property type="protein sequence ID" value="ACA31165.1"/>
    <property type="molecule type" value="Genomic_DNA"/>
</dbReference>
<dbReference type="RefSeq" id="WP_012340566.1">
    <property type="nucleotide sequence ID" value="NC_010519.1"/>
</dbReference>
<dbReference type="SMR" id="B0UUE2"/>
<dbReference type="STRING" id="228400.HSM_1421"/>
<dbReference type="GeneID" id="31487719"/>
<dbReference type="KEGG" id="hsm:HSM_1421"/>
<dbReference type="HOGENOM" id="CLU_036666_0_0_6"/>
<dbReference type="UniPathway" id="UPA00030"/>
<dbReference type="UniPathway" id="UPA00357">
    <property type="reaction ID" value="UER00474"/>
</dbReference>
<dbReference type="GO" id="GO:0005737">
    <property type="term" value="C:cytoplasm"/>
    <property type="evidence" value="ECO:0007669"/>
    <property type="project" value="UniProtKB-SubCell"/>
</dbReference>
<dbReference type="GO" id="GO:0008676">
    <property type="term" value="F:3-deoxy-8-phosphooctulonate synthase activity"/>
    <property type="evidence" value="ECO:0007669"/>
    <property type="project" value="UniProtKB-UniRule"/>
</dbReference>
<dbReference type="GO" id="GO:0019294">
    <property type="term" value="P:keto-3-deoxy-D-manno-octulosonic acid biosynthetic process"/>
    <property type="evidence" value="ECO:0007669"/>
    <property type="project" value="UniProtKB-UniRule"/>
</dbReference>
<dbReference type="FunFam" id="3.20.20.70:FF:000058">
    <property type="entry name" value="2-dehydro-3-deoxyphosphooctonate aldolase"/>
    <property type="match status" value="1"/>
</dbReference>
<dbReference type="Gene3D" id="3.20.20.70">
    <property type="entry name" value="Aldolase class I"/>
    <property type="match status" value="1"/>
</dbReference>
<dbReference type="HAMAP" id="MF_00056">
    <property type="entry name" value="KDO8P_synth"/>
    <property type="match status" value="1"/>
</dbReference>
<dbReference type="InterPro" id="IPR013785">
    <property type="entry name" value="Aldolase_TIM"/>
</dbReference>
<dbReference type="InterPro" id="IPR006218">
    <property type="entry name" value="DAHP1/KDSA"/>
</dbReference>
<dbReference type="InterPro" id="IPR006269">
    <property type="entry name" value="KDO8P_synthase"/>
</dbReference>
<dbReference type="NCBIfam" id="TIGR01362">
    <property type="entry name" value="KDO8P_synth"/>
    <property type="match status" value="1"/>
</dbReference>
<dbReference type="NCBIfam" id="NF003543">
    <property type="entry name" value="PRK05198.1"/>
    <property type="match status" value="1"/>
</dbReference>
<dbReference type="NCBIfam" id="NF009109">
    <property type="entry name" value="PRK12457.1"/>
    <property type="match status" value="1"/>
</dbReference>
<dbReference type="PANTHER" id="PTHR21057">
    <property type="entry name" value="PHOSPHO-2-DEHYDRO-3-DEOXYHEPTONATE ALDOLASE"/>
    <property type="match status" value="1"/>
</dbReference>
<dbReference type="Pfam" id="PF00793">
    <property type="entry name" value="DAHP_synth_1"/>
    <property type="match status" value="1"/>
</dbReference>
<dbReference type="SUPFAM" id="SSF51569">
    <property type="entry name" value="Aldolase"/>
    <property type="match status" value="1"/>
</dbReference>
<comment type="catalytic activity">
    <reaction evidence="1">
        <text>D-arabinose 5-phosphate + phosphoenolpyruvate + H2O = 3-deoxy-alpha-D-manno-2-octulosonate-8-phosphate + phosphate</text>
        <dbReference type="Rhea" id="RHEA:14053"/>
        <dbReference type="ChEBI" id="CHEBI:15377"/>
        <dbReference type="ChEBI" id="CHEBI:43474"/>
        <dbReference type="ChEBI" id="CHEBI:57693"/>
        <dbReference type="ChEBI" id="CHEBI:58702"/>
        <dbReference type="ChEBI" id="CHEBI:85985"/>
        <dbReference type="EC" id="2.5.1.55"/>
    </reaction>
</comment>
<comment type="pathway">
    <text evidence="1">Carbohydrate biosynthesis; 3-deoxy-D-manno-octulosonate biosynthesis; 3-deoxy-D-manno-octulosonate from D-ribulose 5-phosphate: step 2/3.</text>
</comment>
<comment type="pathway">
    <text evidence="1">Bacterial outer membrane biogenesis; lipopolysaccharide biosynthesis.</text>
</comment>
<comment type="subcellular location">
    <subcellularLocation>
        <location evidence="1">Cytoplasm</location>
    </subcellularLocation>
</comment>
<comment type="similarity">
    <text evidence="1">Belongs to the KdsA family.</text>
</comment>
<name>KDSA_HISS2</name>
<reference key="1">
    <citation type="submission" date="2008-02" db="EMBL/GenBank/DDBJ databases">
        <title>Complete sequence of Haemophilus somnus 2336.</title>
        <authorList>
            <consortium name="US DOE Joint Genome Institute"/>
            <person name="Siddaramappa S."/>
            <person name="Duncan A.J."/>
            <person name="Challacombe J.F."/>
            <person name="Rainey D."/>
            <person name="Gillaspy A.F."/>
            <person name="Carson M."/>
            <person name="Gipson J."/>
            <person name="Gipson M."/>
            <person name="Bruce D."/>
            <person name="Detter J.C."/>
            <person name="Han C.S."/>
            <person name="Land M."/>
            <person name="Tapia R."/>
            <person name="Thompson L.S."/>
            <person name="Orvis J."/>
            <person name="Zaitshik J."/>
            <person name="Barnes G."/>
            <person name="Brettin T.S."/>
            <person name="Dyer D.W."/>
            <person name="Inzana T.J."/>
        </authorList>
    </citation>
    <scope>NUCLEOTIDE SEQUENCE [LARGE SCALE GENOMIC DNA]</scope>
    <source>
        <strain>2336</strain>
    </source>
</reference>
<keyword id="KW-0963">Cytoplasm</keyword>
<keyword id="KW-0448">Lipopolysaccharide biosynthesis</keyword>
<keyword id="KW-0808">Transferase</keyword>